<organism>
    <name type="scientific">Yersinia pestis</name>
    <dbReference type="NCBI Taxonomy" id="632"/>
    <lineage>
        <taxon>Bacteria</taxon>
        <taxon>Pseudomonadati</taxon>
        <taxon>Pseudomonadota</taxon>
        <taxon>Gammaproteobacteria</taxon>
        <taxon>Enterobacterales</taxon>
        <taxon>Yersiniaceae</taxon>
        <taxon>Yersinia</taxon>
    </lineage>
</organism>
<dbReference type="EC" id="3.4.23.48" evidence="3"/>
<dbReference type="EMBL" id="X15136">
    <property type="protein sequence ID" value="CAA33235.1"/>
    <property type="molecule type" value="Genomic_DNA"/>
</dbReference>
<dbReference type="EMBL" id="M27820">
    <property type="protein sequence ID" value="AAA27667.1"/>
    <property type="molecule type" value="Genomic_DNA"/>
</dbReference>
<dbReference type="EMBL" id="AF053945">
    <property type="protein sequence ID" value="AAC62545.1"/>
    <property type="molecule type" value="Genomic_DNA"/>
</dbReference>
<dbReference type="EMBL" id="AL109969">
    <property type="protein sequence ID" value="CAB53170.1"/>
    <property type="molecule type" value="Genomic_DNA"/>
</dbReference>
<dbReference type="EMBL" id="AE017046">
    <property type="protein sequence ID" value="AAS58765.1"/>
    <property type="molecule type" value="Genomic_DNA"/>
</dbReference>
<dbReference type="PIR" id="A42928">
    <property type="entry name" value="A42928"/>
</dbReference>
<dbReference type="PIR" id="S06979">
    <property type="entry name" value="A30916"/>
</dbReference>
<dbReference type="RefSeq" id="NP_395233.1">
    <property type="nucleotide sequence ID" value="NC_003132.1"/>
</dbReference>
<dbReference type="RefSeq" id="NP_857784.1">
    <property type="nucleotide sequence ID" value="NC_004837.1"/>
</dbReference>
<dbReference type="RefSeq" id="WP_002218234.1">
    <property type="nucleotide sequence ID" value="NZ_WUCM01000123.1"/>
</dbReference>
<dbReference type="RefSeq" id="YP_006960975.1">
    <property type="nucleotide sequence ID" value="NC_019235.1"/>
</dbReference>
<dbReference type="PDB" id="2X4M">
    <property type="method" value="X-ray"/>
    <property type="resolution" value="2.55 A"/>
    <property type="chains" value="A/B/C/D=21-312"/>
</dbReference>
<dbReference type="PDB" id="2X55">
    <property type="method" value="X-ray"/>
    <property type="resolution" value="1.85 A"/>
    <property type="chains" value="A=21-312"/>
</dbReference>
<dbReference type="PDB" id="2X56">
    <property type="method" value="X-ray"/>
    <property type="resolution" value="2.30 A"/>
    <property type="chains" value="A=21-312"/>
</dbReference>
<dbReference type="PDB" id="4DCB">
    <property type="method" value="X-ray"/>
    <property type="resolution" value="2.03 A"/>
    <property type="chains" value="A=25-312"/>
</dbReference>
<dbReference type="PDBsum" id="2X4M"/>
<dbReference type="PDBsum" id="2X55"/>
<dbReference type="PDBsum" id="2X56"/>
<dbReference type="PDBsum" id="4DCB"/>
<dbReference type="SMR" id="P17811"/>
<dbReference type="IntAct" id="P17811">
    <property type="interactions" value="1"/>
</dbReference>
<dbReference type="MINT" id="P17811"/>
<dbReference type="ChEMBL" id="CHEMBL1075037"/>
<dbReference type="MEROPS" id="A26.003"/>
<dbReference type="DNASU" id="1149148"/>
<dbReference type="EnsemblBacteria" id="AAS58765">
    <property type="protein sequence ID" value="AAS58765"/>
    <property type="gene ID" value="YP_pPCP08"/>
</dbReference>
<dbReference type="GeneID" id="57977666"/>
<dbReference type="KEGG" id="ype:YPPCP1.07"/>
<dbReference type="KEGG" id="ypm:YP_pPCP08"/>
<dbReference type="PATRIC" id="fig|214092.21.peg.114"/>
<dbReference type="HOGENOM" id="CLU_063041_1_0_6"/>
<dbReference type="OMA" id="YNYDNGA"/>
<dbReference type="OrthoDB" id="2112810at2"/>
<dbReference type="BRENDA" id="3.4.23.48">
    <property type="organism ID" value="4559"/>
</dbReference>
<dbReference type="BRENDA" id="3.4.23.49">
    <property type="organism ID" value="4559"/>
</dbReference>
<dbReference type="EvolutionaryTrace" id="P17811"/>
<dbReference type="PRO" id="PR:P17811"/>
<dbReference type="Proteomes" id="UP000000815">
    <property type="component" value="Plasmid pPCP1"/>
</dbReference>
<dbReference type="Proteomes" id="UP000001019">
    <property type="component" value="Plasmid pPCP1"/>
</dbReference>
<dbReference type="GO" id="GO:0009279">
    <property type="term" value="C:cell outer membrane"/>
    <property type="evidence" value="ECO:0007669"/>
    <property type="project" value="UniProtKB-SubCell"/>
</dbReference>
<dbReference type="GO" id="GO:0004190">
    <property type="term" value="F:aspartic-type endopeptidase activity"/>
    <property type="evidence" value="ECO:0007669"/>
    <property type="project" value="UniProtKB-KW"/>
</dbReference>
<dbReference type="GO" id="GO:0006508">
    <property type="term" value="P:proteolysis"/>
    <property type="evidence" value="ECO:0007669"/>
    <property type="project" value="UniProtKB-KW"/>
</dbReference>
<dbReference type="Gene3D" id="2.40.128.90">
    <property type="entry name" value="OMPT-like"/>
    <property type="match status" value="1"/>
</dbReference>
<dbReference type="InterPro" id="IPR020080">
    <property type="entry name" value="OM_adhesin/peptidase_omptin"/>
</dbReference>
<dbReference type="InterPro" id="IPR053724">
    <property type="entry name" value="OMP_A26_sf"/>
</dbReference>
<dbReference type="InterPro" id="IPR020079">
    <property type="entry name" value="Peptidase_A26_CS"/>
</dbReference>
<dbReference type="InterPro" id="IPR000036">
    <property type="entry name" value="Peptidase_A26_omptin"/>
</dbReference>
<dbReference type="NCBIfam" id="NF008223">
    <property type="entry name" value="PRK10993.1-3"/>
    <property type="match status" value="1"/>
</dbReference>
<dbReference type="NCBIfam" id="NF009230">
    <property type="entry name" value="PRK12580.1"/>
    <property type="match status" value="1"/>
</dbReference>
<dbReference type="Pfam" id="PF01278">
    <property type="entry name" value="Omptin"/>
    <property type="match status" value="1"/>
</dbReference>
<dbReference type="PIRSF" id="PIRSF001522">
    <property type="entry name" value="Peptidase_A26"/>
    <property type="match status" value="1"/>
</dbReference>
<dbReference type="PRINTS" id="PR00482">
    <property type="entry name" value="OMPTIN"/>
</dbReference>
<dbReference type="SUPFAM" id="SSF69917">
    <property type="entry name" value="OMPT-like"/>
    <property type="match status" value="1"/>
</dbReference>
<dbReference type="PROSITE" id="PS00834">
    <property type="entry name" value="OMPTIN_1"/>
    <property type="match status" value="1"/>
</dbReference>
<dbReference type="PROSITE" id="PS00835">
    <property type="entry name" value="OMPTIN_2"/>
    <property type="match status" value="1"/>
</dbReference>
<feature type="signal peptide" evidence="10">
    <location>
        <begin position="1"/>
        <end position="20"/>
    </location>
</feature>
<feature type="chain" id="PRO_0000025819" description="Plasminogen activator">
    <location>
        <begin position="21"/>
        <end position="312"/>
    </location>
</feature>
<feature type="topological domain" description="Periplasmic" evidence="2">
    <location>
        <begin position="21"/>
        <end position="31"/>
    </location>
</feature>
<feature type="transmembrane region" description="Beta stranded; Name=1" evidence="2">
    <location>
        <begin position="32"/>
        <end position="40"/>
    </location>
</feature>
<feature type="topological domain" description="Extracellular" evidence="2">
    <location>
        <begin position="41"/>
        <end position="70"/>
    </location>
</feature>
<feature type="transmembrane region" description="Beta stranded; Name=2" evidence="2">
    <location>
        <begin position="71"/>
        <end position="80"/>
    </location>
</feature>
<feature type="topological domain" description="Periplasmic" evidence="2">
    <location>
        <begin position="81"/>
        <end position="84"/>
    </location>
</feature>
<feature type="transmembrane region" description="Beta stranded; Name=3" evidence="2">
    <location>
        <begin position="85"/>
        <end position="94"/>
    </location>
</feature>
<feature type="topological domain" description="Extracellular" evidence="2">
    <location>
        <begin position="95"/>
        <end position="131"/>
    </location>
</feature>
<feature type="transmembrane region" description="Beta stranded; Name=4" evidence="2">
    <location>
        <begin position="132"/>
        <end position="140"/>
    </location>
</feature>
<feature type="topological domain" description="Periplasmic" evidence="2">
    <location>
        <begin position="141"/>
        <end position="145"/>
    </location>
</feature>
<feature type="transmembrane region" description="Beta stranded; Name=5" evidence="2">
    <location>
        <begin position="146"/>
        <end position="154"/>
    </location>
</feature>
<feature type="topological domain" description="Extracellular" evidence="2">
    <location>
        <begin position="155"/>
        <end position="194"/>
    </location>
</feature>
<feature type="transmembrane region" description="Beta stranded; Name=6" evidence="2">
    <location>
        <begin position="195"/>
        <end position="204"/>
    </location>
</feature>
<feature type="topological domain" description="Periplasmic" evidence="2">
    <location>
        <begin position="205"/>
        <end position="207"/>
    </location>
</feature>
<feature type="transmembrane region" description="Beta stranded; Name=7" evidence="2">
    <location>
        <begin position="208"/>
        <end position="216"/>
    </location>
</feature>
<feature type="topological domain" description="Extracellular" evidence="2">
    <location>
        <begin position="217"/>
        <end position="244"/>
    </location>
</feature>
<feature type="transmembrane region" description="Beta stranded; Name=8" evidence="2">
    <location>
        <begin position="245"/>
        <end position="255"/>
    </location>
</feature>
<feature type="topological domain" description="Periplasmic" evidence="2">
    <location>
        <begin position="256"/>
        <end position="258"/>
    </location>
</feature>
<feature type="transmembrane region" description="Beta stranded; Name=9" evidence="2">
    <location>
        <begin position="259"/>
        <end position="267"/>
    </location>
</feature>
<feature type="topological domain" description="Extracellular" evidence="2">
    <location>
        <begin position="268"/>
        <end position="301"/>
    </location>
</feature>
<feature type="transmembrane region" description="Beta stranded; Name=10" evidence="2">
    <location>
        <begin position="302"/>
        <end position="312"/>
    </location>
</feature>
<feature type="active site" evidence="9 10">
    <location>
        <position position="104"/>
    </location>
</feature>
<feature type="active site" evidence="10">
    <location>
        <position position="106"/>
    </location>
</feature>
<feature type="active site" evidence="10">
    <location>
        <position position="226"/>
    </location>
</feature>
<feature type="active site" evidence="10">
    <location>
        <position position="228"/>
    </location>
</feature>
<feature type="mutagenesis site" description="No plasminogen cleavage." evidence="2">
    <original>D</original>
    <variation>A</variation>
    <location>
        <position position="104"/>
    </location>
</feature>
<feature type="mutagenesis site" description="A high percentage of mice survive Y.pestis infection." evidence="1">
    <original>D</original>
    <variation>E</variation>
    <location>
        <position position="104"/>
    </location>
</feature>
<feature type="mutagenesis site" description="About 15% plasminogen cleavage." evidence="2">
    <original>D</original>
    <variation>N</variation>
    <location>
        <position position="104"/>
    </location>
</feature>
<feature type="mutagenesis site" description="Extremely low plasminogen cleavage, no autocleavage." evidence="2">
    <original>D</original>
    <variation>A</variation>
    <location>
        <position position="106"/>
    </location>
</feature>
<feature type="mutagenesis site" description="Extremely low plasminogen cleavage." evidence="2">
    <original>D</original>
    <variation>N</variation>
    <location>
        <position position="106"/>
    </location>
</feature>
<feature type="mutagenesis site" description="No plasminogen cleavage." evidence="2">
    <original>H</original>
    <variation>N</variation>
    <location>
        <position position="228"/>
    </location>
</feature>
<feature type="mutagenesis site" description="Very low plasminogen cleavage." evidence="2">
    <original>R</original>
    <variation>A</variation>
    <variation>K</variation>
    <location>
        <position position="231"/>
    </location>
</feature>
<feature type="sequence conflict" description="In Ref. 5; AAS58765." evidence="8" ref="5">
    <original>T</original>
    <variation>I</variation>
    <location>
        <position position="279"/>
    </location>
</feature>
<feature type="helix" evidence="18">
    <location>
        <begin position="31"/>
        <end position="33"/>
    </location>
</feature>
<feature type="strand" evidence="17">
    <location>
        <begin position="34"/>
        <end position="52"/>
    </location>
</feature>
<feature type="turn" evidence="17">
    <location>
        <begin position="54"/>
        <end position="56"/>
    </location>
</feature>
<feature type="strand" evidence="17">
    <location>
        <begin position="59"/>
        <end position="82"/>
    </location>
</feature>
<feature type="strand" evidence="17">
    <location>
        <begin position="85"/>
        <end position="96"/>
    </location>
</feature>
<feature type="strand" evidence="17">
    <location>
        <begin position="98"/>
        <end position="106"/>
    </location>
</feature>
<feature type="strand" evidence="17">
    <location>
        <begin position="116"/>
        <end position="142"/>
    </location>
</feature>
<feature type="strand" evidence="17">
    <location>
        <begin position="144"/>
        <end position="165"/>
    </location>
</feature>
<feature type="strand" evidence="17">
    <location>
        <begin position="167"/>
        <end position="170"/>
    </location>
</feature>
<feature type="turn" evidence="17">
    <location>
        <begin position="171"/>
        <end position="174"/>
    </location>
</feature>
<feature type="strand" evidence="17">
    <location>
        <begin position="175"/>
        <end position="178"/>
    </location>
</feature>
<feature type="strand" evidence="17">
    <location>
        <begin position="184"/>
        <end position="205"/>
    </location>
</feature>
<feature type="strand" evidence="17">
    <location>
        <begin position="208"/>
        <end position="228"/>
    </location>
</feature>
<feature type="helix" evidence="17">
    <location>
        <begin position="229"/>
        <end position="231"/>
    </location>
</feature>
<feature type="strand" evidence="17">
    <location>
        <begin position="233"/>
        <end position="256"/>
    </location>
</feature>
<feature type="strand" evidence="17">
    <location>
        <begin position="259"/>
        <end position="270"/>
    </location>
</feature>
<feature type="strand" evidence="18">
    <location>
        <begin position="275"/>
        <end position="280"/>
    </location>
</feature>
<feature type="turn" evidence="16">
    <location>
        <begin position="282"/>
        <end position="284"/>
    </location>
</feature>
<feature type="helix" evidence="17">
    <location>
        <begin position="292"/>
        <end position="294"/>
    </location>
</feature>
<feature type="strand" evidence="17">
    <location>
        <begin position="295"/>
        <end position="312"/>
    </location>
</feature>
<evidence type="ECO:0000269" key="1">
    <source>
    </source>
</evidence>
<evidence type="ECO:0000269" key="2">
    <source>
    </source>
</evidence>
<evidence type="ECO:0000269" key="3">
    <source>
    </source>
</evidence>
<evidence type="ECO:0000269" key="4">
    <source>
    </source>
</evidence>
<evidence type="ECO:0000269" key="5">
    <source>
    </source>
</evidence>
<evidence type="ECO:0000303" key="6">
    <source>
    </source>
</evidence>
<evidence type="ECO:0000303" key="7">
    <source>
    </source>
</evidence>
<evidence type="ECO:0000305" key="8"/>
<evidence type="ECO:0000305" key="9">
    <source>
    </source>
</evidence>
<evidence type="ECO:0000305" key="10">
    <source>
    </source>
</evidence>
<evidence type="ECO:0000305" key="11">
    <source>
    </source>
</evidence>
<evidence type="ECO:0007744" key="12">
    <source>
        <dbReference type="PDB" id="2X4M"/>
    </source>
</evidence>
<evidence type="ECO:0007744" key="13">
    <source>
        <dbReference type="PDB" id="2X55"/>
    </source>
</evidence>
<evidence type="ECO:0007744" key="14">
    <source>
        <dbReference type="PDB" id="2X56"/>
    </source>
</evidence>
<evidence type="ECO:0007744" key="15">
    <source>
        <dbReference type="PDB" id="4DCB"/>
    </source>
</evidence>
<evidence type="ECO:0007829" key="16">
    <source>
        <dbReference type="PDB" id="2X4M"/>
    </source>
</evidence>
<evidence type="ECO:0007829" key="17">
    <source>
        <dbReference type="PDB" id="2X55"/>
    </source>
</evidence>
<evidence type="ECO:0007829" key="18">
    <source>
        <dbReference type="PDB" id="4DCB"/>
    </source>
</evidence>
<comment type="function">
    <text evidence="2 3 4 5 9">In the mammalian host activates (cleaves) plasminogen to generate the serine protease plasmin. Plasmin degrades fibrin clots (fibrinolysis) and facilitates bacterial cell migration, enabling rapid dissemination of bacteria from the initial site of infection (Probable). Cleaves host plasminogen to generate plasmin and probably also has autocatalytic activity (PubMed:20637417, PubMed:22645135). Fibrinolytic activity prevails at 37 degrees Celsius whereas coagulase expression predominates at lower temperatures (28 degrees Celsius) (PubMed:2526282). Cleaves plasminogen; plasminogen cleavage is much higher than coagulase activity (PubMed:20637417, PubMed:22645135, PubMed:2526282, PubMed:2651310).</text>
</comment>
<comment type="catalytic activity">
    <reaction evidence="3">
        <text>Converts human Glu-plasminogen to plasmin by cleaving the 560-Arg-|-Val-561 peptide bond that is also hydrolyzed by the mammalian u-plasminogen activator and t-plasminogen activator. Also cleaves arginyl bonds in other proteins.</text>
        <dbReference type="EC" id="3.4.23.48"/>
    </reaction>
</comment>
<comment type="activity regulation">
    <text evidence="2 3">Requires bacterial lipopolysaccharide (LPS) for activation; addition of LPS to inactive protein reactivates it (PubMed:20637417). In the absence of LPS the active site groove is slightly narrower, and peptide substrate binds deep within the active site groove, displacing the nucleophilic water molecule (PubMed:22645135).</text>
</comment>
<comment type="biophysicochemical properties">
    <phDependence>
        <text evidence="2">Optimum pH is 6-7 for plasminogen cleavage (PubMed:20637417).</text>
    </phDependence>
</comment>
<comment type="subcellular location">
    <subcellularLocation>
        <location evidence="10 11">Cell outer membrane</location>
        <topology evidence="2 3">Multi-pass membrane protein</topology>
    </subcellularLocation>
</comment>
<comment type="domain">
    <text evidence="2 3">Forms a narrow, elliptical 10-stranded beta barrel with the active site pairs on the extracellular surface (PubMed:20637417, PubMed:22645135).</text>
</comment>
<comment type="disruption phenotype">
    <text evidence="1">90% survival of infected mice, mice develop a robust immune defense (PubMed:17635705).</text>
</comment>
<comment type="similarity">
    <text evidence="8">Belongs to the peptidase A26 family.</text>
</comment>
<accession>P17811</accession>
<sequence>MKKSSIVATIITILSGSANAASSQLIPNISPDSFTVAASTGMLSGKSHEMLYDAETGRKISQLDWKIKNVAILKGDISWDPYSFLTLNARGWTSLASGSGNMDDYDWMNENQSEWTDHSSHPATNVNHANEYDLNVKGWLLQDENYKAGITAGYQETRFSWTATGGSYSYNNGAYTGNFPKGVRVIGYNQRFSMPYIGLAGQYRINDFELNALFKFSDWVRAHDNDEHYMRDLTFREKTSGSRYYGTVINAGYYVTPNAKVFAEFTYSKYDEGKGGTQTIDKNSGDSVSIGGDAAGISNKNYTVTAGLQYRF</sequence>
<geneLocation type="plasmid">
    <name>pPCP1</name>
</geneLocation>
<geneLocation type="plasmid">
    <name>pKYP1</name>
</geneLocation>
<keyword id="KW-0002">3D-structure</keyword>
<keyword id="KW-0064">Aspartyl protease</keyword>
<keyword id="KW-0998">Cell outer membrane</keyword>
<keyword id="KW-0378">Hydrolase</keyword>
<keyword id="KW-0472">Membrane</keyword>
<keyword id="KW-0614">Plasmid</keyword>
<keyword id="KW-0645">Protease</keyword>
<keyword id="KW-1185">Reference proteome</keyword>
<keyword id="KW-0732">Signal</keyword>
<keyword id="KW-0812">Transmembrane</keyword>
<keyword id="KW-1134">Transmembrane beta strand</keyword>
<keyword id="KW-0843">Virulence</keyword>
<proteinExistence type="evidence at protein level"/>
<reference key="1">
    <citation type="journal article" date="1989" name="Mol. Microbiol.">
        <title>A Yersinia pestis-specific DNA fragment encodes temperature-dependent coagulase and fibrinolysin-associated phenotypes.</title>
        <authorList>
            <person name="McDonough K.A."/>
            <person name="Falkow S."/>
        </authorList>
    </citation>
    <scope>NUCLEOTIDE SEQUENCE [GENOMIC DNA]</scope>
    <scope>FUNCTION</scope>
    <scope>SUBCELLULAR LOCATION</scope>
    <source>
        <strain>EV76-6</strain>
        <plasmid>pKYP1</plasmid>
    </source>
</reference>
<reference key="2">
    <citation type="journal article" date="1989" name="Infect. Immun.">
        <title>Nucleotide sequence of the plasminogen activator gene of Yersinia pestis: relationship to ompT of Escherichia coli and gene E of Salmonella typhimurium.</title>
        <authorList>
            <person name="Sodeinde O.A."/>
            <person name="Goguen J.D."/>
        </authorList>
    </citation>
    <scope>NUCLEOTIDE SEQUENCE [GENOMIC DNA]</scope>
    <scope>FUNCTION</scope>
    <source>
        <strain>KIM5 / Biovar Mediaevalis</strain>
        <plasmid>pPCP1</plasmid>
    </source>
</reference>
<reference key="3">
    <citation type="journal article" date="1998" name="J. Bacteriol.">
        <title>Structural organization of virulence-associated plasmids of Yersinia pestis.</title>
        <authorList>
            <person name="Hu P."/>
            <person name="Elliott J."/>
            <person name="McCready P."/>
            <person name="Skowronski E."/>
            <person name="Garnes J."/>
            <person name="Kobayashi A."/>
            <person name="Brubaker R.R."/>
            <person name="Garcia E."/>
        </authorList>
    </citation>
    <scope>NUCLEOTIDE SEQUENCE [GENOMIC DNA]</scope>
    <source>
        <strain>KIM5 / Biovar Mediaevalis</strain>
        <plasmid>pPCP1</plasmid>
    </source>
</reference>
<reference key="4">
    <citation type="journal article" date="2001" name="Nature">
        <title>Genome sequence of Yersinia pestis, the causative agent of plague.</title>
        <authorList>
            <person name="Parkhill J."/>
            <person name="Wren B.W."/>
            <person name="Thomson N.R."/>
            <person name="Titball R.W."/>
            <person name="Holden M.T.G."/>
            <person name="Prentice M.B."/>
            <person name="Sebaihia M."/>
            <person name="James K.D."/>
            <person name="Churcher C.M."/>
            <person name="Mungall K.L."/>
            <person name="Baker S."/>
            <person name="Basham D."/>
            <person name="Bentley S.D."/>
            <person name="Brooks K."/>
            <person name="Cerdeno-Tarraga A.-M."/>
            <person name="Chillingworth T."/>
            <person name="Cronin A."/>
            <person name="Davies R.M."/>
            <person name="Davis P."/>
            <person name="Dougan G."/>
            <person name="Feltwell T."/>
            <person name="Hamlin N."/>
            <person name="Holroyd S."/>
            <person name="Jagels K."/>
            <person name="Karlyshev A.V."/>
            <person name="Leather S."/>
            <person name="Moule S."/>
            <person name="Oyston P.C.F."/>
            <person name="Quail M.A."/>
            <person name="Rutherford K.M."/>
            <person name="Simmonds M."/>
            <person name="Skelton J."/>
            <person name="Stevens K."/>
            <person name="Whitehead S."/>
            <person name="Barrell B.G."/>
        </authorList>
    </citation>
    <scope>NUCLEOTIDE SEQUENCE [LARGE SCALE GENOMIC DNA]</scope>
    <source>
        <strain>CO-92 / Biovar Orientalis</strain>
        <plasmid>pPCP1</plasmid>
    </source>
</reference>
<reference key="5">
    <citation type="journal article" date="2004" name="DNA Res.">
        <title>Complete genome sequence of Yersinia pestis strain 91001, an isolate avirulent to humans.</title>
        <authorList>
            <person name="Song Y."/>
            <person name="Tong Z."/>
            <person name="Wang J."/>
            <person name="Wang L."/>
            <person name="Guo Z."/>
            <person name="Han Y."/>
            <person name="Zhang J."/>
            <person name="Pei D."/>
            <person name="Zhou D."/>
            <person name="Qin H."/>
            <person name="Pang X."/>
            <person name="Han Y."/>
            <person name="Zhai J."/>
            <person name="Li M."/>
            <person name="Cui B."/>
            <person name="Qi Z."/>
            <person name="Jin L."/>
            <person name="Dai R."/>
            <person name="Chen F."/>
            <person name="Li S."/>
            <person name="Ye C."/>
            <person name="Du Z."/>
            <person name="Lin W."/>
            <person name="Wang J."/>
            <person name="Yu J."/>
            <person name="Yang H."/>
            <person name="Wang J."/>
            <person name="Huang P."/>
            <person name="Yang R."/>
        </authorList>
    </citation>
    <scope>NUCLEOTIDE SEQUENCE [LARGE SCALE GENOMIC DNA]</scope>
    <source>
        <strain>91001 / Biovar Mediaevalis</strain>
        <plasmid>pPCP1</plasmid>
    </source>
</reference>
<reference key="6">
    <citation type="journal article" date="2007" name="J. Thromb. Haemost.">
        <title>Fibrin and fibrinolysis in infection and host defense.</title>
        <authorList>
            <person name="Degen J.L."/>
            <person name="Bugge T.H."/>
            <person name="Goguen J.D."/>
        </authorList>
    </citation>
    <scope>DISRUPTION PHENOTYPE</scope>
    <scope>REVIEW</scope>
    <scope>MUTAGENESIS OF ASP-104</scope>
</reference>
<reference evidence="12 13 14" key="7">
    <citation type="journal article" date="2010" name="Structure">
        <title>An active site water network in the plasminogen activator pla from Yersinia pestis.</title>
        <authorList>
            <person name="Eren E."/>
            <person name="Murphy M."/>
            <person name="Goguen J."/>
            <person name="van den Berg B."/>
        </authorList>
    </citation>
    <scope>X-RAY CRYSTALLOGRAPHY (1.85 ANGSTROMS) OF 21-312 WITH AND WITHOUT LPS ANALOG</scope>
    <scope>FUNCTION</scope>
    <scope>ACTIVITY REGULATION</scope>
    <scope>BIOPHYSICOCHEMICAL PROPERTIES</scope>
    <scope>SUBCELLULAR LOCATION</scope>
    <scope>DOMAIN</scope>
    <scope>TOPOLOGY</scope>
    <scope>MUTAGENESIS OF ASP-104; ASP-106; HIS-228 AND ARG-231</scope>
</reference>
<reference evidence="15" key="8">
    <citation type="journal article" date="2012" name="J. Biol. Chem.">
        <title>Structural basis for activation of an integral membrane protease by lipopolysaccharide.</title>
        <authorList>
            <person name="Eren E."/>
            <person name="van den Berg B."/>
        </authorList>
    </citation>
    <scope>X-RAY CRYSTALLOGRAPHY (2.03 ANGSTROMS) OF 25-312 IN COMPLEX WITH SUBSTRATE PEPTIDE</scope>
    <scope>FUNCTION</scope>
    <scope>CATALYTIC ACTIVITY</scope>
    <scope>ACTIVITY REGULATION</scope>
    <scope>DOMAIN</scope>
</reference>
<gene>
    <name evidence="6" type="primary">pla</name>
    <name type="ordered locus">YPPCP1.07</name>
    <name type="ordered locus">YP_pPCP08</name>
</gene>
<name>PLA_YERPE</name>
<protein>
    <recommendedName>
        <fullName evidence="7">Plasminogen activator</fullName>
        <shortName evidence="6">Pla</shortName>
        <ecNumber evidence="3">3.4.23.48</ecNumber>
    </recommendedName>
    <alternativeName>
        <fullName>Coagulase/fibrinolysin</fullName>
    </alternativeName>
</protein>